<organism>
    <name type="scientific">Candida albicans (strain SC5314 / ATCC MYA-2876)</name>
    <name type="common">Yeast</name>
    <dbReference type="NCBI Taxonomy" id="237561"/>
    <lineage>
        <taxon>Eukaryota</taxon>
        <taxon>Fungi</taxon>
        <taxon>Dikarya</taxon>
        <taxon>Ascomycota</taxon>
        <taxon>Saccharomycotina</taxon>
        <taxon>Pichiomycetes</taxon>
        <taxon>Debaryomycetaceae</taxon>
        <taxon>Candida/Lodderomyces clade</taxon>
        <taxon>Candida</taxon>
    </lineage>
</organism>
<accession>Q5A201</accession>
<accession>A0A1D8PSA7</accession>
<accession>Q5A251</accession>
<comment type="function">
    <text evidence="5">Probable transcription factor involved in response to fluconazole, LiCl, and copper.</text>
</comment>
<comment type="subcellular location">
    <subcellularLocation>
        <location evidence="7">Nucleus</location>
    </subcellularLocation>
</comment>
<comment type="induction">
    <text evidence="4 6">Induced via CAP1 during oxitive stress, as well as during biofilm formation.</text>
</comment>
<comment type="disruption phenotype">
    <text evidence="5">Leads to altered sensitivity to fluconazole, LiCl, and copper.</text>
</comment>
<reference key="1">
    <citation type="journal article" date="2004" name="Proc. Natl. Acad. Sci. U.S.A.">
        <title>The diploid genome sequence of Candida albicans.</title>
        <authorList>
            <person name="Jones T."/>
            <person name="Federspiel N.A."/>
            <person name="Chibana H."/>
            <person name="Dungan J."/>
            <person name="Kalman S."/>
            <person name="Magee B.B."/>
            <person name="Newport G."/>
            <person name="Thorstenson Y.R."/>
            <person name="Agabian N."/>
            <person name="Magee P.T."/>
            <person name="Davis R.W."/>
            <person name="Scherer S."/>
        </authorList>
    </citation>
    <scope>NUCLEOTIDE SEQUENCE [LARGE SCALE GENOMIC DNA]</scope>
    <source>
        <strain>SC5314 / ATCC MYA-2876</strain>
    </source>
</reference>
<reference key="2">
    <citation type="journal article" date="2007" name="Genome Biol.">
        <title>Assembly of the Candida albicans genome into sixteen supercontigs aligned on the eight chromosomes.</title>
        <authorList>
            <person name="van het Hoog M."/>
            <person name="Rast T.J."/>
            <person name="Martchenko M."/>
            <person name="Grindle S."/>
            <person name="Dignard D."/>
            <person name="Hogues H."/>
            <person name="Cuomo C."/>
            <person name="Berriman M."/>
            <person name="Scherer S."/>
            <person name="Magee B.B."/>
            <person name="Whiteway M."/>
            <person name="Chibana H."/>
            <person name="Nantel A."/>
            <person name="Magee P.T."/>
        </authorList>
    </citation>
    <scope>GENOME REANNOTATION</scope>
    <source>
        <strain>SC5314 / ATCC MYA-2876</strain>
    </source>
</reference>
<reference key="3">
    <citation type="journal article" date="2013" name="Genome Biol.">
        <title>Assembly of a phased diploid Candida albicans genome facilitates allele-specific measurements and provides a simple model for repeat and indel structure.</title>
        <authorList>
            <person name="Muzzey D."/>
            <person name="Schwartz K."/>
            <person name="Weissman J.S."/>
            <person name="Sherlock G."/>
        </authorList>
    </citation>
    <scope>NUCLEOTIDE SEQUENCE [LARGE SCALE GENOMIC DNA]</scope>
    <scope>GENOME REANNOTATION</scope>
    <source>
        <strain>SC5314 / ATCC MYA-2876</strain>
    </source>
</reference>
<reference key="4">
    <citation type="journal article" date="2006" name="Free Radic. Biol. Med.">
        <title>Cap1p is involved in multiple pathways of oxidative stress response in Candida albicans.</title>
        <authorList>
            <person name="Wang Y."/>
            <person name="Cao Y.Y."/>
            <person name="Jia X.M."/>
            <person name="Cao Y.B."/>
            <person name="Gao P.H."/>
            <person name="Fu X.P."/>
            <person name="Ying K."/>
            <person name="Chen W.S."/>
            <person name="Jiang Y.Y."/>
        </authorList>
    </citation>
    <scope>INDUCTION</scope>
</reference>
<reference key="5">
    <citation type="journal article" date="2009" name="PLoS Genet.">
        <title>A phenotypic profile of the Candida albicans regulatory network.</title>
        <authorList>
            <person name="Homann O.R."/>
            <person name="Dea J."/>
            <person name="Noble S.M."/>
            <person name="Johnson A.D."/>
        </authorList>
    </citation>
    <scope>DISRUPTION PHENOTYPE</scope>
    <scope>FUNCTION</scope>
</reference>
<reference key="6">
    <citation type="journal article" date="2012" name="Cell">
        <title>A recently evolved transcriptional network controls biofilm development in Candida albicans.</title>
        <authorList>
            <person name="Nobile C.J."/>
            <person name="Fox E.P."/>
            <person name="Nett J.E."/>
            <person name="Sorrells T.R."/>
            <person name="Mitrovich Q.M."/>
            <person name="Hernday A.D."/>
            <person name="Tuch B.B."/>
            <person name="Andes D.R."/>
            <person name="Johnson A.D."/>
        </authorList>
    </citation>
    <scope>INDUCTION</scope>
</reference>
<keyword id="KW-0175">Coiled coil</keyword>
<keyword id="KW-0479">Metal-binding</keyword>
<keyword id="KW-0539">Nucleus</keyword>
<keyword id="KW-1185">Reference proteome</keyword>
<keyword id="KW-0346">Stress response</keyword>
<keyword id="KW-0862">Zinc</keyword>
<keyword id="KW-0863">Zinc-finger</keyword>
<protein>
    <recommendedName>
        <fullName>Transcriptional regulator GZF3</fullName>
    </recommendedName>
</protein>
<sequence length="712" mass="75916">MSMSDIQQRPQIPTTTTAAVAAAASTNVNTGAATTSTATTGNTPTTTPTSPIENISKVPVKPSVDVPVKPKLEQQQQQQSEQSSKPPPPPPEQQQQHQLPTPPIKPPKTGTTSSSSSTTTSSATSSKISMSGPVCGNCQTQTTPLWRRDETGQVLCNACGLFLKLHGRPRPISLKTDTIKSRNRVKQNGSNSQSSKSSGANTPELKSKEGKSGKKSPKSKKKSLGNGNGNGNSSHDHNTLTPLLPATSNNTPTFKSTTSQSQHQQNQNHHHQHHNHHHHLPNHVLQTHQVPLHYPSSTPTQFAPGLQRITSPLLLSTTSSSSSIRTEPNNNNTSKLTPIQAAAGALENMSNELGPSATFKKGNNINGISLMNKTKKDVSSINGSSTSLSSSSASSSIFSSVAPSTSSSSSLSNGTTINNPAPKLPTLGSKISSPSSQPFTRSTTPLQTLPPLHKIASHESSLPPLHNISTYNNNNSGGGADGGQQSMANYSQTNRSPINGNQDNNNNNNNNNNNNNNGNNNGNNNSNNNGNNFTASAHEVTLLKTRISELELVNDLYRTRIMELEAMEQAARLRENSMKKRLDEVMNLQINYQNLLNNNGGMSSQTQPQPSQQPQQAGQYYSNNNNNNNNDQGSQSISPNVSITGSTTITSPNSRSKIISETTPTHHQQQQGGVGAGDNESIILPPLKRNRTDELTDANGNGNGNDNKKVKI</sequence>
<feature type="chain" id="PRO_0000426081" description="Transcriptional regulator GZF3">
    <location>
        <begin position="1"/>
        <end position="712"/>
    </location>
</feature>
<feature type="zinc finger region" description="GATA-type" evidence="2">
    <location>
        <begin position="135"/>
        <end position="159"/>
    </location>
</feature>
<feature type="region of interest" description="Disordered" evidence="3">
    <location>
        <begin position="1"/>
        <end position="20"/>
    </location>
</feature>
<feature type="region of interest" description="Disordered" evidence="3">
    <location>
        <begin position="27"/>
        <end position="135"/>
    </location>
</feature>
<feature type="region of interest" description="Disordered" evidence="3">
    <location>
        <begin position="173"/>
        <end position="280"/>
    </location>
</feature>
<feature type="region of interest" description="Disordered" evidence="3">
    <location>
        <begin position="377"/>
        <end position="533"/>
    </location>
</feature>
<feature type="region of interest" description="Disordered" evidence="3">
    <location>
        <begin position="596"/>
        <end position="712"/>
    </location>
</feature>
<feature type="coiled-coil region" evidence="1">
    <location>
        <begin position="545"/>
        <end position="598"/>
    </location>
</feature>
<feature type="compositionally biased region" description="Polar residues" evidence="3">
    <location>
        <begin position="1"/>
        <end position="13"/>
    </location>
</feature>
<feature type="compositionally biased region" description="Low complexity" evidence="3">
    <location>
        <begin position="27"/>
        <end position="84"/>
    </location>
</feature>
<feature type="compositionally biased region" description="Low complexity" evidence="3">
    <location>
        <begin position="107"/>
        <end position="131"/>
    </location>
</feature>
<feature type="compositionally biased region" description="Low complexity" evidence="3">
    <location>
        <begin position="186"/>
        <end position="199"/>
    </location>
</feature>
<feature type="compositionally biased region" description="Basic residues" evidence="3">
    <location>
        <begin position="213"/>
        <end position="223"/>
    </location>
</feature>
<feature type="compositionally biased region" description="Polar residues" evidence="3">
    <location>
        <begin position="246"/>
        <end position="261"/>
    </location>
</feature>
<feature type="compositionally biased region" description="Basic residues" evidence="3">
    <location>
        <begin position="268"/>
        <end position="280"/>
    </location>
</feature>
<feature type="compositionally biased region" description="Low complexity" evidence="3">
    <location>
        <begin position="379"/>
        <end position="414"/>
    </location>
</feature>
<feature type="compositionally biased region" description="Polar residues" evidence="3">
    <location>
        <begin position="429"/>
        <end position="447"/>
    </location>
</feature>
<feature type="compositionally biased region" description="Polar residues" evidence="3">
    <location>
        <begin position="484"/>
        <end position="498"/>
    </location>
</feature>
<feature type="compositionally biased region" description="Low complexity" evidence="3">
    <location>
        <begin position="499"/>
        <end position="532"/>
    </location>
</feature>
<feature type="compositionally biased region" description="Low complexity" evidence="3">
    <location>
        <begin position="596"/>
        <end position="616"/>
    </location>
</feature>
<feature type="compositionally biased region" description="Polar residues" evidence="3">
    <location>
        <begin position="631"/>
        <end position="667"/>
    </location>
</feature>
<gene>
    <name type="primary">GZF3</name>
    <name type="synonym">DAL80</name>
    <name type="ordered locus">CAALFM_CR02850CA</name>
    <name type="ORF">CaO19.10361</name>
    <name type="ORF">CaO19.2842</name>
</gene>
<name>GZF3_CANAL</name>
<evidence type="ECO:0000255" key="1"/>
<evidence type="ECO:0000255" key="2">
    <source>
        <dbReference type="PROSITE-ProRule" id="PRU00094"/>
    </source>
</evidence>
<evidence type="ECO:0000256" key="3">
    <source>
        <dbReference type="SAM" id="MobiDB-lite"/>
    </source>
</evidence>
<evidence type="ECO:0000269" key="4">
    <source>
    </source>
</evidence>
<evidence type="ECO:0000269" key="5">
    <source>
    </source>
</evidence>
<evidence type="ECO:0000269" key="6">
    <source>
    </source>
</evidence>
<evidence type="ECO:0000305" key="7"/>
<dbReference type="EMBL" id="CP017630">
    <property type="protein sequence ID" value="AOW31025.1"/>
    <property type="molecule type" value="Genomic_DNA"/>
</dbReference>
<dbReference type="RefSeq" id="XP_715773.2">
    <property type="nucleotide sequence ID" value="XM_710680.2"/>
</dbReference>
<dbReference type="SMR" id="Q5A201"/>
<dbReference type="BioGRID" id="1225650">
    <property type="interactions" value="2"/>
</dbReference>
<dbReference type="STRING" id="237561.Q5A201"/>
<dbReference type="EnsemblFungi" id="CR_02850C_A-T">
    <property type="protein sequence ID" value="CR_02850C_A-T-p1"/>
    <property type="gene ID" value="CR_02850C_A"/>
</dbReference>
<dbReference type="GeneID" id="3642563"/>
<dbReference type="KEGG" id="cal:CAALFM_CR02850CA"/>
<dbReference type="CGD" id="CAL0000183131">
    <property type="gene designation" value="GZF3"/>
</dbReference>
<dbReference type="VEuPathDB" id="FungiDB:CR_02850C_A"/>
<dbReference type="eggNOG" id="KOG1601">
    <property type="taxonomic scope" value="Eukaryota"/>
</dbReference>
<dbReference type="HOGENOM" id="CLU_027626_0_0_1"/>
<dbReference type="InParanoid" id="Q5A201"/>
<dbReference type="OrthoDB" id="515401at2759"/>
<dbReference type="PRO" id="PR:Q5A201"/>
<dbReference type="Proteomes" id="UP000000559">
    <property type="component" value="Chromosome R"/>
</dbReference>
<dbReference type="GO" id="GO:0005634">
    <property type="term" value="C:nucleus"/>
    <property type="evidence" value="ECO:0000318"/>
    <property type="project" value="GO_Central"/>
</dbReference>
<dbReference type="GO" id="GO:0000981">
    <property type="term" value="F:DNA-binding transcription factor activity, RNA polymerase II-specific"/>
    <property type="evidence" value="ECO:0000318"/>
    <property type="project" value="GO_Central"/>
</dbReference>
<dbReference type="GO" id="GO:0000978">
    <property type="term" value="F:RNA polymerase II cis-regulatory region sequence-specific DNA binding"/>
    <property type="evidence" value="ECO:0000318"/>
    <property type="project" value="GO_Central"/>
</dbReference>
<dbReference type="GO" id="GO:0008270">
    <property type="term" value="F:zinc ion binding"/>
    <property type="evidence" value="ECO:0007669"/>
    <property type="project" value="UniProtKB-KW"/>
</dbReference>
<dbReference type="GO" id="GO:0071280">
    <property type="term" value="P:cellular response to copper ion"/>
    <property type="evidence" value="ECO:0000315"/>
    <property type="project" value="CGD"/>
</dbReference>
<dbReference type="GO" id="GO:0034605">
    <property type="term" value="P:cellular response to heat"/>
    <property type="evidence" value="ECO:0000315"/>
    <property type="project" value="CGD"/>
</dbReference>
<dbReference type="GO" id="GO:0071285">
    <property type="term" value="P:cellular response to lithium ion"/>
    <property type="evidence" value="ECO:0000315"/>
    <property type="project" value="CGD"/>
</dbReference>
<dbReference type="GO" id="GO:0030447">
    <property type="term" value="P:filamentous growth"/>
    <property type="evidence" value="ECO:0000315"/>
    <property type="project" value="CGD"/>
</dbReference>
<dbReference type="GO" id="GO:0000122">
    <property type="term" value="P:negative regulation of transcription by RNA polymerase II"/>
    <property type="evidence" value="ECO:0000318"/>
    <property type="project" value="GO_Central"/>
</dbReference>
<dbReference type="GO" id="GO:0045944">
    <property type="term" value="P:positive regulation of transcription by RNA polymerase II"/>
    <property type="evidence" value="ECO:0000318"/>
    <property type="project" value="GO_Central"/>
</dbReference>
<dbReference type="CDD" id="cd00202">
    <property type="entry name" value="ZnF_GATA"/>
    <property type="match status" value="1"/>
</dbReference>
<dbReference type="FunFam" id="3.30.50.10:FF:000007">
    <property type="entry name" value="Nitrogen regulatory AreA, N-terminal"/>
    <property type="match status" value="1"/>
</dbReference>
<dbReference type="Gene3D" id="3.30.50.10">
    <property type="entry name" value="Erythroid Transcription Factor GATA-1, subunit A"/>
    <property type="match status" value="1"/>
</dbReference>
<dbReference type="InterPro" id="IPR056998">
    <property type="entry name" value="Asd-4/GZF3_helical"/>
</dbReference>
<dbReference type="InterPro" id="IPR039355">
    <property type="entry name" value="Transcription_factor_GATA"/>
</dbReference>
<dbReference type="InterPro" id="IPR000679">
    <property type="entry name" value="Znf_GATA"/>
</dbReference>
<dbReference type="InterPro" id="IPR013088">
    <property type="entry name" value="Znf_NHR/GATA"/>
</dbReference>
<dbReference type="PANTHER" id="PTHR10071:SF281">
    <property type="entry name" value="BOX A-BINDING FACTOR-RELATED"/>
    <property type="match status" value="1"/>
</dbReference>
<dbReference type="PANTHER" id="PTHR10071">
    <property type="entry name" value="TRANSCRIPTION FACTOR GATA FAMILY MEMBER"/>
    <property type="match status" value="1"/>
</dbReference>
<dbReference type="Pfam" id="PF25026">
    <property type="entry name" value="Asd-4"/>
    <property type="match status" value="1"/>
</dbReference>
<dbReference type="Pfam" id="PF00320">
    <property type="entry name" value="GATA"/>
    <property type="match status" value="1"/>
</dbReference>
<dbReference type="PRINTS" id="PR00619">
    <property type="entry name" value="GATAZNFINGER"/>
</dbReference>
<dbReference type="SMART" id="SM00401">
    <property type="entry name" value="ZnF_GATA"/>
    <property type="match status" value="1"/>
</dbReference>
<dbReference type="SUPFAM" id="SSF57716">
    <property type="entry name" value="Glucocorticoid receptor-like (DNA-binding domain)"/>
    <property type="match status" value="1"/>
</dbReference>
<dbReference type="PROSITE" id="PS00344">
    <property type="entry name" value="GATA_ZN_FINGER_1"/>
    <property type="match status" value="1"/>
</dbReference>
<dbReference type="PROSITE" id="PS50114">
    <property type="entry name" value="GATA_ZN_FINGER_2"/>
    <property type="match status" value="1"/>
</dbReference>
<proteinExistence type="evidence at transcript level"/>